<feature type="chain" id="PRO_1000132313" description="Fatty acid metabolism regulator protein">
    <location>
        <begin position="1"/>
        <end position="239"/>
    </location>
</feature>
<feature type="domain" description="HTH gntR-type" evidence="1">
    <location>
        <begin position="6"/>
        <end position="74"/>
    </location>
</feature>
<feature type="DNA-binding region" description="H-T-H motif" evidence="1">
    <location>
        <begin position="34"/>
        <end position="53"/>
    </location>
</feature>
<keyword id="KW-0010">Activator</keyword>
<keyword id="KW-0963">Cytoplasm</keyword>
<keyword id="KW-0238">DNA-binding</keyword>
<keyword id="KW-0276">Fatty acid metabolism</keyword>
<keyword id="KW-0443">Lipid metabolism</keyword>
<keyword id="KW-0678">Repressor</keyword>
<keyword id="KW-0804">Transcription</keyword>
<keyword id="KW-0805">Transcription regulation</keyword>
<protein>
    <recommendedName>
        <fullName evidence="1">Fatty acid metabolism regulator protein</fullName>
    </recommendedName>
</protein>
<reference key="1">
    <citation type="journal article" date="2011" name="Proc. Natl. Acad. Sci. U.S.A.">
        <title>Genomic anatomy of Escherichia coli O157:H7 outbreaks.</title>
        <authorList>
            <person name="Eppinger M."/>
            <person name="Mammel M.K."/>
            <person name="Leclerc J.E."/>
            <person name="Ravel J."/>
            <person name="Cebula T.A."/>
        </authorList>
    </citation>
    <scope>NUCLEOTIDE SEQUENCE [LARGE SCALE GENOMIC DNA]</scope>
    <source>
        <strain>EC4115 / EHEC</strain>
    </source>
</reference>
<gene>
    <name evidence="1" type="primary">fadR</name>
    <name type="ordered locus">ECH74115_1674</name>
</gene>
<sequence length="239" mass="26969">MVIKAQSPAGFAEEYIIESIWNNRFPPGTILPAERELSELIGVTRTTLREVLQRLARDGWLTIQHGKPTKVNNFWETSGLNILETLARLDHESVPQLIDNLLSVRTNISTIFIRTAFRQHPDKAQEVLATANEVADHADAFAELDYNIFRGLAFASGNPIYGLILNGMKGLYTRIGRHYFANPEARSLALGFYHKLSALCSEGAHDQVYETVRRYGHESGEIWHRMQKNLPGDLAIQGR</sequence>
<comment type="function">
    <text evidence="1">Multifunctional regulator of fatty acid metabolism.</text>
</comment>
<comment type="subunit">
    <text evidence="1">Homodimer.</text>
</comment>
<comment type="subcellular location">
    <subcellularLocation>
        <location evidence="1">Cytoplasm</location>
    </subcellularLocation>
</comment>
<evidence type="ECO:0000255" key="1">
    <source>
        <dbReference type="HAMAP-Rule" id="MF_00696"/>
    </source>
</evidence>
<proteinExistence type="inferred from homology"/>
<name>FADR_ECO5E</name>
<accession>B5YXL1</accession>
<organism>
    <name type="scientific">Escherichia coli O157:H7 (strain EC4115 / EHEC)</name>
    <dbReference type="NCBI Taxonomy" id="444450"/>
    <lineage>
        <taxon>Bacteria</taxon>
        <taxon>Pseudomonadati</taxon>
        <taxon>Pseudomonadota</taxon>
        <taxon>Gammaproteobacteria</taxon>
        <taxon>Enterobacterales</taxon>
        <taxon>Enterobacteriaceae</taxon>
        <taxon>Escherichia</taxon>
    </lineage>
</organism>
<dbReference type="EMBL" id="CP001164">
    <property type="protein sequence ID" value="ACI34856.1"/>
    <property type="molecule type" value="Genomic_DNA"/>
</dbReference>
<dbReference type="RefSeq" id="WP_000234823.1">
    <property type="nucleotide sequence ID" value="NC_011353.1"/>
</dbReference>
<dbReference type="SMR" id="B5YXL1"/>
<dbReference type="GeneID" id="93776245"/>
<dbReference type="KEGG" id="ecf:ECH74115_1674"/>
<dbReference type="HOGENOM" id="CLU_017584_9_4_6"/>
<dbReference type="GO" id="GO:0005737">
    <property type="term" value="C:cytoplasm"/>
    <property type="evidence" value="ECO:0007669"/>
    <property type="project" value="UniProtKB-SubCell"/>
</dbReference>
<dbReference type="GO" id="GO:0003677">
    <property type="term" value="F:DNA binding"/>
    <property type="evidence" value="ECO:0007669"/>
    <property type="project" value="UniProtKB-KW"/>
</dbReference>
<dbReference type="GO" id="GO:0003700">
    <property type="term" value="F:DNA-binding transcription factor activity"/>
    <property type="evidence" value="ECO:0007669"/>
    <property type="project" value="UniProtKB-UniRule"/>
</dbReference>
<dbReference type="GO" id="GO:0000062">
    <property type="term" value="F:fatty-acyl-CoA binding"/>
    <property type="evidence" value="ECO:0007669"/>
    <property type="project" value="InterPro"/>
</dbReference>
<dbReference type="GO" id="GO:0006631">
    <property type="term" value="P:fatty acid metabolic process"/>
    <property type="evidence" value="ECO:0007669"/>
    <property type="project" value="UniProtKB-KW"/>
</dbReference>
<dbReference type="GO" id="GO:0019217">
    <property type="term" value="P:regulation of fatty acid metabolic process"/>
    <property type="evidence" value="ECO:0007669"/>
    <property type="project" value="UniProtKB-UniRule"/>
</dbReference>
<dbReference type="CDD" id="cd07377">
    <property type="entry name" value="WHTH_GntR"/>
    <property type="match status" value="1"/>
</dbReference>
<dbReference type="FunFam" id="1.10.10.10:FF:000036">
    <property type="entry name" value="Fatty acid metabolism regulator protein"/>
    <property type="match status" value="1"/>
</dbReference>
<dbReference type="FunFam" id="1.20.120.530:FF:000003">
    <property type="entry name" value="Fatty acid metabolism regulator protein"/>
    <property type="match status" value="1"/>
</dbReference>
<dbReference type="Gene3D" id="1.20.120.530">
    <property type="entry name" value="GntR ligand-binding domain-like"/>
    <property type="match status" value="1"/>
</dbReference>
<dbReference type="Gene3D" id="1.10.10.10">
    <property type="entry name" value="Winged helix-like DNA-binding domain superfamily/Winged helix DNA-binding domain"/>
    <property type="match status" value="1"/>
</dbReference>
<dbReference type="HAMAP" id="MF_00696">
    <property type="entry name" value="HTH_FadR"/>
    <property type="match status" value="1"/>
</dbReference>
<dbReference type="InterPro" id="IPR014178">
    <property type="entry name" value="FA-response_TF_FadR"/>
</dbReference>
<dbReference type="InterPro" id="IPR028374">
    <property type="entry name" value="FadR_C"/>
</dbReference>
<dbReference type="InterPro" id="IPR008920">
    <property type="entry name" value="TF_FadR/GntR_C"/>
</dbReference>
<dbReference type="InterPro" id="IPR000524">
    <property type="entry name" value="Tscrpt_reg_HTH_GntR"/>
</dbReference>
<dbReference type="InterPro" id="IPR036388">
    <property type="entry name" value="WH-like_DNA-bd_sf"/>
</dbReference>
<dbReference type="InterPro" id="IPR036390">
    <property type="entry name" value="WH_DNA-bd_sf"/>
</dbReference>
<dbReference type="NCBIfam" id="TIGR02812">
    <property type="entry name" value="fadR_gamma"/>
    <property type="match status" value="1"/>
</dbReference>
<dbReference type="NCBIfam" id="NF003444">
    <property type="entry name" value="PRK04984.1"/>
    <property type="match status" value="1"/>
</dbReference>
<dbReference type="PANTHER" id="PTHR43537:SF52">
    <property type="entry name" value="FATTY ACID METABOLISM REGULATOR PROTEIN"/>
    <property type="match status" value="1"/>
</dbReference>
<dbReference type="PANTHER" id="PTHR43537">
    <property type="entry name" value="TRANSCRIPTIONAL REGULATOR, GNTR FAMILY"/>
    <property type="match status" value="1"/>
</dbReference>
<dbReference type="Pfam" id="PF07840">
    <property type="entry name" value="FadR_C"/>
    <property type="match status" value="1"/>
</dbReference>
<dbReference type="Pfam" id="PF00392">
    <property type="entry name" value="GntR"/>
    <property type="match status" value="1"/>
</dbReference>
<dbReference type="PRINTS" id="PR00035">
    <property type="entry name" value="HTHGNTR"/>
</dbReference>
<dbReference type="SMART" id="SM00345">
    <property type="entry name" value="HTH_GNTR"/>
    <property type="match status" value="1"/>
</dbReference>
<dbReference type="SUPFAM" id="SSF48008">
    <property type="entry name" value="GntR ligand-binding domain-like"/>
    <property type="match status" value="1"/>
</dbReference>
<dbReference type="SUPFAM" id="SSF46785">
    <property type="entry name" value="Winged helix' DNA-binding domain"/>
    <property type="match status" value="1"/>
</dbReference>
<dbReference type="PROSITE" id="PS50949">
    <property type="entry name" value="HTH_GNTR"/>
    <property type="match status" value="1"/>
</dbReference>